<comment type="function">
    <text evidence="2">May play a role in antibiotic biosynthesis.</text>
</comment>
<comment type="subcellular location">
    <subcellularLocation>
        <location evidence="1">Cytoplasm</location>
    </subcellularLocation>
</comment>
<comment type="similarity">
    <text evidence="2">Belongs to the gamma-glutamylcyclotransferase family.</text>
</comment>
<comment type="caution">
    <text evidence="2">Lacks the conserved Glu residue at position 70 that serves as proton acceptor in enzymes with gamma-glutamylcyclotransferase activity.</text>
</comment>
<dbReference type="EMBL" id="FN543502">
    <property type="protein sequence ID" value="CBG90002.1"/>
    <property type="molecule type" value="Genomic_DNA"/>
</dbReference>
<dbReference type="RefSeq" id="WP_012907370.1">
    <property type="nucleotide sequence ID" value="NC_013716.1"/>
</dbReference>
<dbReference type="SMR" id="D2TN58"/>
<dbReference type="STRING" id="637910.ROD_32831"/>
<dbReference type="KEGG" id="cro:ROD_32831"/>
<dbReference type="eggNOG" id="COG2105">
    <property type="taxonomic scope" value="Bacteria"/>
</dbReference>
<dbReference type="HOGENOM" id="CLU_083466_5_2_6"/>
<dbReference type="OrthoDB" id="482277at2"/>
<dbReference type="Proteomes" id="UP000001889">
    <property type="component" value="Chromosome"/>
</dbReference>
<dbReference type="GO" id="GO:0005829">
    <property type="term" value="C:cytosol"/>
    <property type="evidence" value="ECO:0007669"/>
    <property type="project" value="TreeGrafter"/>
</dbReference>
<dbReference type="GO" id="GO:0061929">
    <property type="term" value="F:gamma-glutamylaminecyclotransferase activity"/>
    <property type="evidence" value="ECO:0007669"/>
    <property type="project" value="InterPro"/>
</dbReference>
<dbReference type="CDD" id="cd06661">
    <property type="entry name" value="GGCT_like"/>
    <property type="match status" value="1"/>
</dbReference>
<dbReference type="FunFam" id="3.10.490.10:FF:000001">
    <property type="entry name" value="Gamma-glutamylcyclotransferase ytfP"/>
    <property type="match status" value="1"/>
</dbReference>
<dbReference type="Gene3D" id="3.10.490.10">
    <property type="entry name" value="Gamma-glutamyl cyclotransferase-like"/>
    <property type="match status" value="1"/>
</dbReference>
<dbReference type="InterPro" id="IPR009288">
    <property type="entry name" value="AIG2-like_dom"/>
</dbReference>
<dbReference type="InterPro" id="IPR039126">
    <property type="entry name" value="GGACT"/>
</dbReference>
<dbReference type="InterPro" id="IPR013024">
    <property type="entry name" value="GGCT-like"/>
</dbReference>
<dbReference type="InterPro" id="IPR036568">
    <property type="entry name" value="GGCT-like_sf"/>
</dbReference>
<dbReference type="PANTHER" id="PTHR12510:SF4">
    <property type="entry name" value="GAMMA-GLUTAMYLAMINECYCLOTRANSFERASE"/>
    <property type="match status" value="1"/>
</dbReference>
<dbReference type="PANTHER" id="PTHR12510">
    <property type="entry name" value="TROPONIN C-AKIN-1 PROTEIN"/>
    <property type="match status" value="1"/>
</dbReference>
<dbReference type="Pfam" id="PF06094">
    <property type="entry name" value="GGACT"/>
    <property type="match status" value="1"/>
</dbReference>
<dbReference type="SUPFAM" id="SSF110857">
    <property type="entry name" value="Gamma-glutamyl cyclotransferase-like"/>
    <property type="match status" value="1"/>
</dbReference>
<accession>D2TN58</accession>
<gene>
    <name type="primary">ytfP</name>
    <name type="ordered locus">ROD_32831</name>
</gene>
<organism>
    <name type="scientific">Citrobacter rodentium (strain ICC168)</name>
    <name type="common">Citrobacter freundii biotype 4280</name>
    <dbReference type="NCBI Taxonomy" id="637910"/>
    <lineage>
        <taxon>Bacteria</taxon>
        <taxon>Pseudomonadati</taxon>
        <taxon>Pseudomonadota</taxon>
        <taxon>Gammaproteobacteria</taxon>
        <taxon>Enterobacterales</taxon>
        <taxon>Enterobacteriaceae</taxon>
        <taxon>Citrobacter</taxon>
    </lineage>
</organism>
<proteinExistence type="evidence at protein level"/>
<sequence length="114" mass="12995">MRIFVYGSLRTKQGNSHWMTNALLLGEYSIDNYQLYSLGHYPGAVPGNGTVHGEVYRIDNATLAELDALRTRGGEYARQLIQTPYGSAWMYVYQRPVEGLTLIESGNWLDRDQY</sequence>
<keyword id="KW-0963">Cytoplasm</keyword>
<keyword id="KW-1185">Reference proteome</keyword>
<feature type="chain" id="PRO_0000418092" description="Gamma-glutamylcyclotransferase family protein ytfP">
    <location>
        <begin position="1"/>
        <end position="114"/>
    </location>
</feature>
<evidence type="ECO:0000269" key="1">
    <source>
    </source>
</evidence>
<evidence type="ECO:0000305" key="2"/>
<name>YTFP_CITRI</name>
<protein>
    <recommendedName>
        <fullName>Gamma-glutamylcyclotransferase family protein ytfP</fullName>
    </recommendedName>
</protein>
<reference key="1">
    <citation type="journal article" date="2010" name="J. Bacteriol.">
        <title>The Citrobacter rodentium genome sequence reveals convergent evolution with human pathogenic Escherichia coli.</title>
        <authorList>
            <person name="Petty N.K."/>
            <person name="Bulgin R."/>
            <person name="Crepin V.F."/>
            <person name="Cerdeno-Tarraga A.M."/>
            <person name="Schroeder G.N."/>
            <person name="Quail M.A."/>
            <person name="Lennard N."/>
            <person name="Corton C."/>
            <person name="Barron A."/>
            <person name="Clark L."/>
            <person name="Toribio A.L."/>
            <person name="Parkhill J."/>
            <person name="Dougan G."/>
            <person name="Frankel G."/>
            <person name="Thomson N.R."/>
        </authorList>
    </citation>
    <scope>NUCLEOTIDE SEQUENCE [LARGE SCALE GENOMIC DNA]</scope>
    <source>
        <strain>ICC168</strain>
    </source>
</reference>
<reference key="2">
    <citation type="journal article" date="2012" name="Nat. Struct. Mol. Biol.">
        <title>Discovery of an archetypal protein transport system in bacterial outer membranes.</title>
        <authorList>
            <person name="Selkrig J."/>
            <person name="Mosbahi K."/>
            <person name="Webb C.T."/>
            <person name="Belousoff M.J."/>
            <person name="Perry A.J."/>
            <person name="Wells T.J."/>
            <person name="Morris F."/>
            <person name="Leyton D.L."/>
            <person name="Totsika M."/>
            <person name="Phan M.D."/>
            <person name="Celik N."/>
            <person name="Kelly M."/>
            <person name="Oates C."/>
            <person name="Hartland E.L."/>
            <person name="Robins-Browne R.M."/>
            <person name="Ramarathinam S.H."/>
            <person name="Purcell A.W."/>
            <person name="Schembri M.A."/>
            <person name="Strugnell R.A."/>
            <person name="Henderson I.R."/>
            <person name="Walker D."/>
            <person name="Lithgow T."/>
        </authorList>
    </citation>
    <scope>SUBCELLULAR LOCATION</scope>
    <source>
        <strain>ICC169</strain>
    </source>
</reference>